<name>MMM1_CANDC</name>
<organism>
    <name type="scientific">Candida dubliniensis (strain CD36 / ATCC MYA-646 / CBS 7987 / NCPF 3949 / NRRL Y-17841)</name>
    <name type="common">Yeast</name>
    <dbReference type="NCBI Taxonomy" id="573826"/>
    <lineage>
        <taxon>Eukaryota</taxon>
        <taxon>Fungi</taxon>
        <taxon>Dikarya</taxon>
        <taxon>Ascomycota</taxon>
        <taxon>Saccharomycotina</taxon>
        <taxon>Pichiomycetes</taxon>
        <taxon>Debaryomycetaceae</taxon>
        <taxon>Candida/Lodderomyces clade</taxon>
        <taxon>Candida</taxon>
    </lineage>
</organism>
<accession>B9WFC9</accession>
<dbReference type="EMBL" id="FM992691">
    <property type="protein sequence ID" value="CAX41948.1"/>
    <property type="molecule type" value="Genomic_DNA"/>
</dbReference>
<dbReference type="RefSeq" id="XP_002419733.1">
    <property type="nucleotide sequence ID" value="XM_002419688.1"/>
</dbReference>
<dbReference type="SMR" id="B9WFC9"/>
<dbReference type="GeneID" id="8047632"/>
<dbReference type="KEGG" id="cdu:CD36_40610"/>
<dbReference type="CGD" id="CAL0000160962">
    <property type="gene designation" value="Cd36_40610"/>
</dbReference>
<dbReference type="eggNOG" id="ENOG502QUUW">
    <property type="taxonomic scope" value="Eukaryota"/>
</dbReference>
<dbReference type="HOGENOM" id="CLU_032730_2_0_1"/>
<dbReference type="OrthoDB" id="5599157at2759"/>
<dbReference type="Proteomes" id="UP000002605">
    <property type="component" value="Chromosome 4"/>
</dbReference>
<dbReference type="GO" id="GO:0005789">
    <property type="term" value="C:endoplasmic reticulum membrane"/>
    <property type="evidence" value="ECO:0007669"/>
    <property type="project" value="UniProtKB-SubCell"/>
</dbReference>
<dbReference type="GO" id="GO:0032865">
    <property type="term" value="C:ERMES complex"/>
    <property type="evidence" value="ECO:0007669"/>
    <property type="project" value="UniProtKB-UniRule"/>
</dbReference>
<dbReference type="GO" id="GO:0008289">
    <property type="term" value="F:lipid binding"/>
    <property type="evidence" value="ECO:0007669"/>
    <property type="project" value="UniProtKB-KW"/>
</dbReference>
<dbReference type="GO" id="GO:0000002">
    <property type="term" value="P:mitochondrial genome maintenance"/>
    <property type="evidence" value="ECO:0007669"/>
    <property type="project" value="UniProtKB-UniRule"/>
</dbReference>
<dbReference type="GO" id="GO:1990456">
    <property type="term" value="P:mitochondrion-endoplasmic reticulum membrane tethering"/>
    <property type="evidence" value="ECO:0007669"/>
    <property type="project" value="TreeGrafter"/>
</dbReference>
<dbReference type="GO" id="GO:0015914">
    <property type="term" value="P:phospholipid transport"/>
    <property type="evidence" value="ECO:0007669"/>
    <property type="project" value="TreeGrafter"/>
</dbReference>
<dbReference type="GO" id="GO:0045040">
    <property type="term" value="P:protein insertion into mitochondrial outer membrane"/>
    <property type="evidence" value="ECO:0007669"/>
    <property type="project" value="UniProtKB-UniRule"/>
</dbReference>
<dbReference type="CDD" id="cd21671">
    <property type="entry name" value="SMP_Mmm1"/>
    <property type="match status" value="1"/>
</dbReference>
<dbReference type="HAMAP" id="MF_03103">
    <property type="entry name" value="Mmm1"/>
    <property type="match status" value="1"/>
</dbReference>
<dbReference type="InterPro" id="IPR027537">
    <property type="entry name" value="Mmm1"/>
</dbReference>
<dbReference type="InterPro" id="IPR019411">
    <property type="entry name" value="MMM1_dom"/>
</dbReference>
<dbReference type="InterPro" id="IPR031468">
    <property type="entry name" value="SMP_LBD"/>
</dbReference>
<dbReference type="PANTHER" id="PTHR13466:SF0">
    <property type="entry name" value="SMP-LTD DOMAIN-CONTAINING PROTEIN"/>
    <property type="match status" value="1"/>
</dbReference>
<dbReference type="PANTHER" id="PTHR13466">
    <property type="entry name" value="TEX2 PROTEIN-RELATED"/>
    <property type="match status" value="1"/>
</dbReference>
<dbReference type="Pfam" id="PF10296">
    <property type="entry name" value="MMM1"/>
    <property type="match status" value="1"/>
</dbReference>
<dbReference type="PROSITE" id="PS51847">
    <property type="entry name" value="SMP"/>
    <property type="match status" value="1"/>
</dbReference>
<reference key="1">
    <citation type="journal article" date="2009" name="Genome Res.">
        <title>Comparative genomics of the fungal pathogens Candida dubliniensis and Candida albicans.</title>
        <authorList>
            <person name="Jackson A.P."/>
            <person name="Gamble J.A."/>
            <person name="Yeomans T."/>
            <person name="Moran G.P."/>
            <person name="Saunders D."/>
            <person name="Harris D."/>
            <person name="Aslett M."/>
            <person name="Barrell J.F."/>
            <person name="Butler G."/>
            <person name="Citiulo F."/>
            <person name="Coleman D.C."/>
            <person name="de Groot P.W.J."/>
            <person name="Goodwin T.J."/>
            <person name="Quail M.A."/>
            <person name="McQuillan J."/>
            <person name="Munro C.A."/>
            <person name="Pain A."/>
            <person name="Poulter R.T."/>
            <person name="Rajandream M.A."/>
            <person name="Renauld H."/>
            <person name="Spiering M.J."/>
            <person name="Tivey A."/>
            <person name="Gow N.A.R."/>
            <person name="Barrell B."/>
            <person name="Sullivan D.J."/>
            <person name="Berriman M."/>
        </authorList>
    </citation>
    <scope>NUCLEOTIDE SEQUENCE [LARGE SCALE GENOMIC DNA]</scope>
    <source>
        <strain>CD36 / ATCC MYA-646 / CBS 7987 / NCPF 3949 / NRRL Y-17841</strain>
    </source>
</reference>
<proteinExistence type="inferred from homology"/>
<keyword id="KW-0256">Endoplasmic reticulum</keyword>
<keyword id="KW-0445">Lipid transport</keyword>
<keyword id="KW-0446">Lipid-binding</keyword>
<keyword id="KW-0472">Membrane</keyword>
<keyword id="KW-0812">Transmembrane</keyword>
<keyword id="KW-1133">Transmembrane helix</keyword>
<keyword id="KW-0813">Transport</keyword>
<sequence length="430" mass="48087">MSQGLIETTTIVETRELGHQIHASLLEQLKLQQEELLQQQRDLFFQEQQLQQQANHPVSNNGNTWSFTQGLVIGQISVIFIIIVFVKFFVFADSSSHIPTKPGLDGATGVIVKRNKKKQHLNGQFANDDGNEDDISLNSNESKISSILEKTYYDVNNHASESLDWFNVLVAQTISQLRSEALLKDNIYHSLNNFLTNAKLPDFIDTINLTEIDIGDDFPIFSNCRIKYGEDLKRLEAKIDVDLSDTLTLGIATKLLLNQPRPLTAVLPVSLTVSIVRFSGCLTVSLINTKDIDLKNFNKASNMNGYSKENGSADSASDNDEDEDDGGTALMFSFSPDYRLEFIVKSLIGSRAKLQDVPKISSLIENQLRTWFIERCVEPRFQVVRLPSLWPRTKNTREPVIKKTPTTSTTINGTSAATVTTPGEFVNSNI</sequence>
<protein>
    <recommendedName>
        <fullName evidence="1">Maintenance of mitochondrial morphology protein 1</fullName>
    </recommendedName>
</protein>
<gene>
    <name evidence="1" type="primary">MMM1</name>
    <name type="ORF">CD36_40610</name>
</gene>
<evidence type="ECO:0000255" key="1">
    <source>
        <dbReference type="HAMAP-Rule" id="MF_03103"/>
    </source>
</evidence>
<evidence type="ECO:0000256" key="2">
    <source>
        <dbReference type="SAM" id="MobiDB-lite"/>
    </source>
</evidence>
<comment type="function">
    <text evidence="1">Component of the ERMES/MDM complex, which serves as a molecular tether to connect the endoplasmic reticulum (ER) and mitochondria. Components of this complex are involved in the control of mitochondrial shape and protein biogenesis, and function in nonvesicular lipid trafficking between the ER and mitochondria. The MDM12-MMM1 subcomplex functions in the major beta-barrel assembly pathway that is responsible for biogenesis of all outer membrane beta-barrel proteins, and acts in a late step after the SAM complex. The MDM10-MDM12-MMM1 subcomplex further acts in the TOM40-specific pathway after the action of the MDM12-MMM1 complex. Essential for establishing and maintaining the structure of mitochondria and maintenance of mtDNA nucleoids.</text>
</comment>
<comment type="subunit">
    <text evidence="1">Homodimer. Component of the ER-mitochondria encounter structure (ERMES) or MDM complex, composed of MMM1, MDM10, MDM12 and MDM34. A MMM1 homodimer associates with one molecule of MDM12 on each side in a pairwise head-to-tail manner, and the SMP-LTD domains of MMM1 and MDM12 generate a continuous hydrophobic tunnel for phospholipid trafficking.</text>
</comment>
<comment type="subcellular location">
    <subcellularLocation>
        <location evidence="1">Endoplasmic reticulum membrane</location>
        <topology evidence="1">Single-pass type I membrane protein</topology>
    </subcellularLocation>
    <text evidence="1">The ERMES/MDM complex localizes to a few discrete foci (around 10 per single cell), that represent mitochondria-endoplasmic reticulum junctions. These foci are often found next to mtDNA nucleoids.</text>
</comment>
<comment type="domain">
    <text evidence="1">The SMP-LTD domain is a barrel-like domain that can bind various types of glycerophospholipids in its interior and mediate their transfer between two adjacent bilayers.</text>
</comment>
<comment type="similarity">
    <text evidence="1">Belongs to the MMM1 family.</text>
</comment>
<feature type="chain" id="PRO_0000384222" description="Maintenance of mitochondrial morphology protein 1">
    <location>
        <begin position="1"/>
        <end position="430"/>
    </location>
</feature>
<feature type="topological domain" description="Lumenal" evidence="1">
    <location>
        <begin position="1"/>
        <end position="70"/>
    </location>
</feature>
<feature type="transmembrane region" description="Helical" evidence="1">
    <location>
        <begin position="71"/>
        <end position="91"/>
    </location>
</feature>
<feature type="topological domain" description="Cytoplasmic" evidence="1">
    <location>
        <begin position="92"/>
        <end position="430"/>
    </location>
</feature>
<feature type="domain" description="SMP-LTD" evidence="1">
    <location>
        <begin position="159"/>
        <end position="387"/>
    </location>
</feature>
<feature type="region of interest" description="Disordered" evidence="2">
    <location>
        <begin position="305"/>
        <end position="326"/>
    </location>
</feature>
<feature type="compositionally biased region" description="Acidic residues" evidence="2">
    <location>
        <begin position="317"/>
        <end position="326"/>
    </location>
</feature>